<proteinExistence type="inferred from homology"/>
<comment type="function">
    <text evidence="1">Isomerase that catalyzes the conversion of deoxy-ribose 1-phosphate (dRib-1-P) and ribose 1-phosphate (Rib-1-P) to deoxy-ribose 5-phosphate (dRib-5-P) and ribose 5-phosphate (Rib-5-P), respectively.</text>
</comment>
<comment type="catalytic activity">
    <reaction evidence="1">
        <text>2-deoxy-alpha-D-ribose 1-phosphate = 2-deoxy-D-ribose 5-phosphate</text>
        <dbReference type="Rhea" id="RHEA:27658"/>
        <dbReference type="ChEBI" id="CHEBI:57259"/>
        <dbReference type="ChEBI" id="CHEBI:62877"/>
        <dbReference type="EC" id="5.4.2.7"/>
    </reaction>
</comment>
<comment type="catalytic activity">
    <reaction evidence="1">
        <text>alpha-D-ribose 1-phosphate = D-ribose 5-phosphate</text>
        <dbReference type="Rhea" id="RHEA:18793"/>
        <dbReference type="ChEBI" id="CHEBI:57720"/>
        <dbReference type="ChEBI" id="CHEBI:78346"/>
        <dbReference type="EC" id="5.4.2.7"/>
    </reaction>
</comment>
<comment type="cofactor">
    <cofactor evidence="1">
        <name>Mn(2+)</name>
        <dbReference type="ChEBI" id="CHEBI:29035"/>
    </cofactor>
    <text evidence="1">Binds 2 manganese ions.</text>
</comment>
<comment type="pathway">
    <text evidence="1">Carbohydrate degradation; 2-deoxy-D-ribose 1-phosphate degradation; D-glyceraldehyde 3-phosphate and acetaldehyde from 2-deoxy-alpha-D-ribose 1-phosphate: step 1/2.</text>
</comment>
<comment type="subcellular location">
    <subcellularLocation>
        <location evidence="1">Cytoplasm</location>
    </subcellularLocation>
</comment>
<comment type="similarity">
    <text evidence="1">Belongs to the phosphopentomutase family.</text>
</comment>
<keyword id="KW-0963">Cytoplasm</keyword>
<keyword id="KW-0413">Isomerase</keyword>
<keyword id="KW-0464">Manganese</keyword>
<keyword id="KW-0479">Metal-binding</keyword>
<sequence length="403" mass="44224">MSKFNRIHLVVLDSVGIGAAPDADKFFNAGVADTDSDTLGHISETAGLSVPNMAKIGLGNISRPIPLKTIPTEDNPTGYVTKLEEVSLGKDTMTGHWEIMGLNITEPFDTFWNGFPEEILTKIEEFSGRKIIREANKPYSGTAVIDDFGPRQMETGELIVYTSADPVLQIAAHEDIIPVEELYKICEYARSITLERPALLGRIIARPYVGEPGNFTRTANRHDYAVSPFQDTVLNKLADAGVPTYAVGKINDIFNGSGITNDMGHNKSNSHGIDTLIKTLQLPEFTKGFSFTNLVDFDANFGHRRDPEGYRDCLHEFDNRLPEIIANMKEDDLLLITADHGNDPTYAGTDHTREYIPLLAYSASFTGNGLIPQGHFADISATVAENFGVDTAMIGESFLGHLK</sequence>
<name>DEOB_STRPF</name>
<evidence type="ECO:0000255" key="1">
    <source>
        <dbReference type="HAMAP-Rule" id="MF_00740"/>
    </source>
</evidence>
<gene>
    <name evidence="1" type="primary">deoB</name>
    <name type="ordered locus">MGAS10750_Spy0788</name>
</gene>
<dbReference type="EC" id="5.4.2.7" evidence="1"/>
<dbReference type="EMBL" id="CP000262">
    <property type="protein sequence ID" value="ABF37738.1"/>
    <property type="molecule type" value="Genomic_DNA"/>
</dbReference>
<dbReference type="SMR" id="Q1J736"/>
<dbReference type="KEGG" id="spi:MGAS10750_Spy0788"/>
<dbReference type="HOGENOM" id="CLU_053861_0_0_9"/>
<dbReference type="UniPathway" id="UPA00002">
    <property type="reaction ID" value="UER00467"/>
</dbReference>
<dbReference type="Proteomes" id="UP000002434">
    <property type="component" value="Chromosome"/>
</dbReference>
<dbReference type="GO" id="GO:0005829">
    <property type="term" value="C:cytosol"/>
    <property type="evidence" value="ECO:0007669"/>
    <property type="project" value="TreeGrafter"/>
</dbReference>
<dbReference type="GO" id="GO:0000287">
    <property type="term" value="F:magnesium ion binding"/>
    <property type="evidence" value="ECO:0007669"/>
    <property type="project" value="InterPro"/>
</dbReference>
<dbReference type="GO" id="GO:0030145">
    <property type="term" value="F:manganese ion binding"/>
    <property type="evidence" value="ECO:0007669"/>
    <property type="project" value="UniProtKB-UniRule"/>
</dbReference>
<dbReference type="GO" id="GO:0008973">
    <property type="term" value="F:phosphopentomutase activity"/>
    <property type="evidence" value="ECO:0007669"/>
    <property type="project" value="UniProtKB-UniRule"/>
</dbReference>
<dbReference type="GO" id="GO:0006018">
    <property type="term" value="P:2-deoxyribose 1-phosphate catabolic process"/>
    <property type="evidence" value="ECO:0007669"/>
    <property type="project" value="UniProtKB-UniRule"/>
</dbReference>
<dbReference type="GO" id="GO:0006015">
    <property type="term" value="P:5-phosphoribose 1-diphosphate biosynthetic process"/>
    <property type="evidence" value="ECO:0007669"/>
    <property type="project" value="UniProtKB-UniPathway"/>
</dbReference>
<dbReference type="GO" id="GO:0043094">
    <property type="term" value="P:metabolic compound salvage"/>
    <property type="evidence" value="ECO:0007669"/>
    <property type="project" value="InterPro"/>
</dbReference>
<dbReference type="GO" id="GO:0009117">
    <property type="term" value="P:nucleotide metabolic process"/>
    <property type="evidence" value="ECO:0007669"/>
    <property type="project" value="InterPro"/>
</dbReference>
<dbReference type="CDD" id="cd16009">
    <property type="entry name" value="PPM"/>
    <property type="match status" value="1"/>
</dbReference>
<dbReference type="FunFam" id="3.30.70.1250:FF:000001">
    <property type="entry name" value="Phosphopentomutase"/>
    <property type="match status" value="1"/>
</dbReference>
<dbReference type="Gene3D" id="3.40.720.10">
    <property type="entry name" value="Alkaline Phosphatase, subunit A"/>
    <property type="match status" value="1"/>
</dbReference>
<dbReference type="Gene3D" id="3.30.70.1250">
    <property type="entry name" value="Phosphopentomutase"/>
    <property type="match status" value="1"/>
</dbReference>
<dbReference type="HAMAP" id="MF_00740">
    <property type="entry name" value="Phosphopentomut"/>
    <property type="match status" value="1"/>
</dbReference>
<dbReference type="InterPro" id="IPR017850">
    <property type="entry name" value="Alkaline_phosphatase_core_sf"/>
</dbReference>
<dbReference type="InterPro" id="IPR010045">
    <property type="entry name" value="DeoB"/>
</dbReference>
<dbReference type="InterPro" id="IPR006124">
    <property type="entry name" value="Metalloenzyme"/>
</dbReference>
<dbReference type="InterPro" id="IPR024052">
    <property type="entry name" value="Phosphopentomutase_DeoB_cap_sf"/>
</dbReference>
<dbReference type="NCBIfam" id="TIGR01696">
    <property type="entry name" value="deoB"/>
    <property type="match status" value="1"/>
</dbReference>
<dbReference type="NCBIfam" id="NF003766">
    <property type="entry name" value="PRK05362.1"/>
    <property type="match status" value="1"/>
</dbReference>
<dbReference type="PANTHER" id="PTHR21110">
    <property type="entry name" value="PHOSPHOPENTOMUTASE"/>
    <property type="match status" value="1"/>
</dbReference>
<dbReference type="PANTHER" id="PTHR21110:SF0">
    <property type="entry name" value="PHOSPHOPENTOMUTASE"/>
    <property type="match status" value="1"/>
</dbReference>
<dbReference type="Pfam" id="PF01676">
    <property type="entry name" value="Metalloenzyme"/>
    <property type="match status" value="1"/>
</dbReference>
<dbReference type="PIRSF" id="PIRSF001491">
    <property type="entry name" value="Ppentomutase"/>
    <property type="match status" value="1"/>
</dbReference>
<dbReference type="SUPFAM" id="SSF53649">
    <property type="entry name" value="Alkaline phosphatase-like"/>
    <property type="match status" value="1"/>
</dbReference>
<dbReference type="SUPFAM" id="SSF143856">
    <property type="entry name" value="DeoB insert domain-like"/>
    <property type="match status" value="1"/>
</dbReference>
<accession>Q1J736</accession>
<feature type="chain" id="PRO_0000258316" description="Phosphopentomutase">
    <location>
        <begin position="1"/>
        <end position="403"/>
    </location>
</feature>
<feature type="binding site" evidence="1">
    <location>
        <position position="13"/>
    </location>
    <ligand>
        <name>Mn(2+)</name>
        <dbReference type="ChEBI" id="CHEBI:29035"/>
        <label>1</label>
    </ligand>
</feature>
<feature type="binding site" evidence="1">
    <location>
        <position position="298"/>
    </location>
    <ligand>
        <name>Mn(2+)</name>
        <dbReference type="ChEBI" id="CHEBI:29035"/>
        <label>2</label>
    </ligand>
</feature>
<feature type="binding site" evidence="1">
    <location>
        <position position="303"/>
    </location>
    <ligand>
        <name>Mn(2+)</name>
        <dbReference type="ChEBI" id="CHEBI:29035"/>
        <label>2</label>
    </ligand>
</feature>
<feature type="binding site" evidence="1">
    <location>
        <position position="339"/>
    </location>
    <ligand>
        <name>Mn(2+)</name>
        <dbReference type="ChEBI" id="CHEBI:29035"/>
        <label>1</label>
    </ligand>
</feature>
<feature type="binding site" evidence="1">
    <location>
        <position position="340"/>
    </location>
    <ligand>
        <name>Mn(2+)</name>
        <dbReference type="ChEBI" id="CHEBI:29035"/>
        <label>1</label>
    </ligand>
</feature>
<feature type="binding site" evidence="1">
    <location>
        <position position="351"/>
    </location>
    <ligand>
        <name>Mn(2+)</name>
        <dbReference type="ChEBI" id="CHEBI:29035"/>
        <label>2</label>
    </ligand>
</feature>
<organism>
    <name type="scientific">Streptococcus pyogenes serotype M4 (strain MGAS10750)</name>
    <dbReference type="NCBI Taxonomy" id="370554"/>
    <lineage>
        <taxon>Bacteria</taxon>
        <taxon>Bacillati</taxon>
        <taxon>Bacillota</taxon>
        <taxon>Bacilli</taxon>
        <taxon>Lactobacillales</taxon>
        <taxon>Streptococcaceae</taxon>
        <taxon>Streptococcus</taxon>
    </lineage>
</organism>
<protein>
    <recommendedName>
        <fullName evidence="1">Phosphopentomutase</fullName>
        <ecNumber evidence="1">5.4.2.7</ecNumber>
    </recommendedName>
    <alternativeName>
        <fullName evidence="1">Phosphodeoxyribomutase</fullName>
    </alternativeName>
</protein>
<reference key="1">
    <citation type="journal article" date="2006" name="Proc. Natl. Acad. Sci. U.S.A.">
        <title>Molecular genetic anatomy of inter- and intraserotype variation in the human bacterial pathogen group A Streptococcus.</title>
        <authorList>
            <person name="Beres S.B."/>
            <person name="Richter E.W."/>
            <person name="Nagiec M.J."/>
            <person name="Sumby P."/>
            <person name="Porcella S.F."/>
            <person name="DeLeo F.R."/>
            <person name="Musser J.M."/>
        </authorList>
    </citation>
    <scope>NUCLEOTIDE SEQUENCE [LARGE SCALE GENOMIC DNA]</scope>
    <source>
        <strain>MGAS10750</strain>
    </source>
</reference>